<reference key="1">
    <citation type="submission" date="2006-12" db="EMBL/GenBank/DDBJ databases">
        <authorList>
            <person name="Hendrix L."/>
            <person name="Mohamoud Y."/>
            <person name="Radune D."/>
            <person name="Shvartsbeyn A."/>
            <person name="Daugherty S."/>
            <person name="Dodson R."/>
            <person name="Durkin A.S."/>
            <person name="Harkins D."/>
            <person name="Huot H."/>
            <person name="Kothari S.P."/>
            <person name="Madupu R."/>
            <person name="Li J."/>
            <person name="Nelson W.C."/>
            <person name="Shrivastava S."/>
            <person name="Giglio M.G."/>
            <person name="Haft D."/>
            <person name="Selengut J."/>
            <person name="Fraser-Ligget C."/>
            <person name="Seshadri R."/>
        </authorList>
    </citation>
    <scope>NUCLEOTIDE SEQUENCE [LARGE SCALE GENOMIC DNA]</scope>
    <source>
        <strain>ATCC 35685 / KC583 / Herrer 020/F12,63</strain>
    </source>
</reference>
<name>RSMA_BARBK</name>
<sequence>MPIDNLPPLREVINAYGLQANKSLGQNFLFDLNLTSKIARQAGNIEGKPVIEIGPGPGGLTRALLAKGAIVTVIERDKRCLPALLEIEKHYPKKLNLIFDDALKQDLSKLSETYPEKPRIIANLPYNIGTQLLLNWLLTTSWPPFYESMTLMFQREVAKRITATPQSPHYSRLSVLAGWRTIAKIAFDVPPQAFIPAPKVTSSVINIIPRPQPLACSVQKLSLVTKVAFGEKRKMLRQSLKTIGGKELLEKAGIDETRRAETLLIPEFITLANLMT</sequence>
<keyword id="KW-0963">Cytoplasm</keyword>
<keyword id="KW-0489">Methyltransferase</keyword>
<keyword id="KW-0694">RNA-binding</keyword>
<keyword id="KW-0698">rRNA processing</keyword>
<keyword id="KW-0949">S-adenosyl-L-methionine</keyword>
<keyword id="KW-0808">Transferase</keyword>
<evidence type="ECO:0000255" key="1">
    <source>
        <dbReference type="HAMAP-Rule" id="MF_00607"/>
    </source>
</evidence>
<dbReference type="EC" id="2.1.1.182" evidence="1"/>
<dbReference type="EMBL" id="CP000524">
    <property type="protein sequence ID" value="ABM45468.1"/>
    <property type="molecule type" value="Genomic_DNA"/>
</dbReference>
<dbReference type="RefSeq" id="WP_005766599.1">
    <property type="nucleotide sequence ID" value="NC_008783.1"/>
</dbReference>
<dbReference type="SMR" id="A1US65"/>
<dbReference type="STRING" id="360095.BARBAKC583_0503"/>
<dbReference type="GeneID" id="4684920"/>
<dbReference type="KEGG" id="bbk:BARBAKC583_0503"/>
<dbReference type="PATRIC" id="fig|360095.6.peg.486"/>
<dbReference type="eggNOG" id="COG0030">
    <property type="taxonomic scope" value="Bacteria"/>
</dbReference>
<dbReference type="HOGENOM" id="CLU_041220_0_1_5"/>
<dbReference type="OrthoDB" id="9814755at2"/>
<dbReference type="Proteomes" id="UP000000643">
    <property type="component" value="Chromosome"/>
</dbReference>
<dbReference type="GO" id="GO:0005829">
    <property type="term" value="C:cytosol"/>
    <property type="evidence" value="ECO:0007669"/>
    <property type="project" value="TreeGrafter"/>
</dbReference>
<dbReference type="GO" id="GO:0052908">
    <property type="term" value="F:16S rRNA (adenine(1518)-N(6)/adenine(1519)-N(6))-dimethyltransferase activity"/>
    <property type="evidence" value="ECO:0007669"/>
    <property type="project" value="UniProtKB-EC"/>
</dbReference>
<dbReference type="GO" id="GO:0003723">
    <property type="term" value="F:RNA binding"/>
    <property type="evidence" value="ECO:0007669"/>
    <property type="project" value="UniProtKB-KW"/>
</dbReference>
<dbReference type="CDD" id="cd02440">
    <property type="entry name" value="AdoMet_MTases"/>
    <property type="match status" value="1"/>
</dbReference>
<dbReference type="FunFam" id="1.10.8.100:FF:000001">
    <property type="entry name" value="Ribosomal RNA small subunit methyltransferase A"/>
    <property type="match status" value="1"/>
</dbReference>
<dbReference type="Gene3D" id="1.10.8.100">
    <property type="entry name" value="Ribosomal RNA adenine dimethylase-like, domain 2"/>
    <property type="match status" value="1"/>
</dbReference>
<dbReference type="Gene3D" id="3.40.50.150">
    <property type="entry name" value="Vaccinia Virus protein VP39"/>
    <property type="match status" value="1"/>
</dbReference>
<dbReference type="HAMAP" id="MF_00607">
    <property type="entry name" value="16SrRNA_methyltr_A"/>
    <property type="match status" value="1"/>
</dbReference>
<dbReference type="InterPro" id="IPR001737">
    <property type="entry name" value="KsgA/Erm"/>
</dbReference>
<dbReference type="InterPro" id="IPR023165">
    <property type="entry name" value="rRNA_Ade_diMease-like_C"/>
</dbReference>
<dbReference type="InterPro" id="IPR020596">
    <property type="entry name" value="rRNA_Ade_Mease_Trfase_CS"/>
</dbReference>
<dbReference type="InterPro" id="IPR020598">
    <property type="entry name" value="rRNA_Ade_methylase_Trfase_N"/>
</dbReference>
<dbReference type="InterPro" id="IPR011530">
    <property type="entry name" value="rRNA_adenine_dimethylase"/>
</dbReference>
<dbReference type="InterPro" id="IPR029063">
    <property type="entry name" value="SAM-dependent_MTases_sf"/>
</dbReference>
<dbReference type="NCBIfam" id="TIGR00755">
    <property type="entry name" value="ksgA"/>
    <property type="match status" value="1"/>
</dbReference>
<dbReference type="PANTHER" id="PTHR11727">
    <property type="entry name" value="DIMETHYLADENOSINE TRANSFERASE"/>
    <property type="match status" value="1"/>
</dbReference>
<dbReference type="PANTHER" id="PTHR11727:SF7">
    <property type="entry name" value="DIMETHYLADENOSINE TRANSFERASE-RELATED"/>
    <property type="match status" value="1"/>
</dbReference>
<dbReference type="Pfam" id="PF00398">
    <property type="entry name" value="RrnaAD"/>
    <property type="match status" value="1"/>
</dbReference>
<dbReference type="SMART" id="SM00650">
    <property type="entry name" value="rADc"/>
    <property type="match status" value="1"/>
</dbReference>
<dbReference type="SUPFAM" id="SSF53335">
    <property type="entry name" value="S-adenosyl-L-methionine-dependent methyltransferases"/>
    <property type="match status" value="1"/>
</dbReference>
<dbReference type="PROSITE" id="PS01131">
    <property type="entry name" value="RRNA_A_DIMETH"/>
    <property type="match status" value="1"/>
</dbReference>
<dbReference type="PROSITE" id="PS51689">
    <property type="entry name" value="SAM_RNA_A_N6_MT"/>
    <property type="match status" value="1"/>
</dbReference>
<accession>A1US65</accession>
<protein>
    <recommendedName>
        <fullName evidence="1">Ribosomal RNA small subunit methyltransferase A</fullName>
        <ecNumber evidence="1">2.1.1.182</ecNumber>
    </recommendedName>
    <alternativeName>
        <fullName evidence="1">16S rRNA (adenine(1518)-N(6)/adenine(1519)-N(6))-dimethyltransferase</fullName>
    </alternativeName>
    <alternativeName>
        <fullName evidence="1">16S rRNA dimethyladenosine transferase</fullName>
    </alternativeName>
    <alternativeName>
        <fullName evidence="1">16S rRNA dimethylase</fullName>
    </alternativeName>
    <alternativeName>
        <fullName evidence="1">S-adenosylmethionine-6-N', N'-adenosyl(rRNA) dimethyltransferase</fullName>
    </alternativeName>
</protein>
<proteinExistence type="inferred from homology"/>
<comment type="function">
    <text evidence="1">Specifically dimethylates two adjacent adenosines (A1518 and A1519) in the loop of a conserved hairpin near the 3'-end of 16S rRNA in the 30S particle. May play a critical role in biogenesis of 30S subunits.</text>
</comment>
<comment type="catalytic activity">
    <reaction evidence="1">
        <text>adenosine(1518)/adenosine(1519) in 16S rRNA + 4 S-adenosyl-L-methionine = N(6)-dimethyladenosine(1518)/N(6)-dimethyladenosine(1519) in 16S rRNA + 4 S-adenosyl-L-homocysteine + 4 H(+)</text>
        <dbReference type="Rhea" id="RHEA:19609"/>
        <dbReference type="Rhea" id="RHEA-COMP:10232"/>
        <dbReference type="Rhea" id="RHEA-COMP:10233"/>
        <dbReference type="ChEBI" id="CHEBI:15378"/>
        <dbReference type="ChEBI" id="CHEBI:57856"/>
        <dbReference type="ChEBI" id="CHEBI:59789"/>
        <dbReference type="ChEBI" id="CHEBI:74411"/>
        <dbReference type="ChEBI" id="CHEBI:74493"/>
        <dbReference type="EC" id="2.1.1.182"/>
    </reaction>
</comment>
<comment type="subcellular location">
    <subcellularLocation>
        <location evidence="1">Cytoplasm</location>
    </subcellularLocation>
</comment>
<comment type="similarity">
    <text evidence="1">Belongs to the class I-like SAM-binding methyltransferase superfamily. rRNA adenine N(6)-methyltransferase family. RsmA subfamily.</text>
</comment>
<feature type="chain" id="PRO_1000056596" description="Ribosomal RNA small subunit methyltransferase A">
    <location>
        <begin position="1"/>
        <end position="276"/>
    </location>
</feature>
<feature type="binding site" evidence="1">
    <location>
        <position position="27"/>
    </location>
    <ligand>
        <name>S-adenosyl-L-methionine</name>
        <dbReference type="ChEBI" id="CHEBI:59789"/>
    </ligand>
</feature>
<feature type="binding site" evidence="1">
    <location>
        <position position="29"/>
    </location>
    <ligand>
        <name>S-adenosyl-L-methionine</name>
        <dbReference type="ChEBI" id="CHEBI:59789"/>
    </ligand>
</feature>
<feature type="binding site" evidence="1">
    <location>
        <position position="54"/>
    </location>
    <ligand>
        <name>S-adenosyl-L-methionine</name>
        <dbReference type="ChEBI" id="CHEBI:59789"/>
    </ligand>
</feature>
<feature type="binding site" evidence="1">
    <location>
        <position position="75"/>
    </location>
    <ligand>
        <name>S-adenosyl-L-methionine</name>
        <dbReference type="ChEBI" id="CHEBI:59789"/>
    </ligand>
</feature>
<feature type="binding site" evidence="1">
    <location>
        <position position="101"/>
    </location>
    <ligand>
        <name>S-adenosyl-L-methionine</name>
        <dbReference type="ChEBI" id="CHEBI:59789"/>
    </ligand>
</feature>
<feature type="binding site" evidence="1">
    <location>
        <position position="123"/>
    </location>
    <ligand>
        <name>S-adenosyl-L-methionine</name>
        <dbReference type="ChEBI" id="CHEBI:59789"/>
    </ligand>
</feature>
<gene>
    <name evidence="1" type="primary">rsmA</name>
    <name evidence="1" type="synonym">ksgA</name>
    <name type="ordered locus">BARBAKC583_0503</name>
</gene>
<organism>
    <name type="scientific">Bartonella bacilliformis (strain ATCC 35685 / KC583 / Herrer 020/F12,63)</name>
    <dbReference type="NCBI Taxonomy" id="360095"/>
    <lineage>
        <taxon>Bacteria</taxon>
        <taxon>Pseudomonadati</taxon>
        <taxon>Pseudomonadota</taxon>
        <taxon>Alphaproteobacteria</taxon>
        <taxon>Hyphomicrobiales</taxon>
        <taxon>Bartonellaceae</taxon>
        <taxon>Bartonella</taxon>
    </lineage>
</organism>